<organism>
    <name type="scientific">Bacillus cereus (strain ATCC 10987 / NRS 248)</name>
    <dbReference type="NCBI Taxonomy" id="222523"/>
    <lineage>
        <taxon>Bacteria</taxon>
        <taxon>Bacillati</taxon>
        <taxon>Bacillota</taxon>
        <taxon>Bacilli</taxon>
        <taxon>Bacillales</taxon>
        <taxon>Bacillaceae</taxon>
        <taxon>Bacillus</taxon>
        <taxon>Bacillus cereus group</taxon>
    </lineage>
</organism>
<evidence type="ECO:0000250" key="1"/>
<evidence type="ECO:0000255" key="2">
    <source>
        <dbReference type="PROSITE-ProRule" id="PRU00208"/>
    </source>
</evidence>
<evidence type="ECO:0000255" key="3">
    <source>
        <dbReference type="PROSITE-ProRule" id="PRU01024"/>
    </source>
</evidence>
<proteinExistence type="inferred from homology"/>
<feature type="chain" id="PRO_0000161948" description="Uncharacterized RNA methyltransferase BCE_0363">
    <location>
        <begin position="1"/>
        <end position="460"/>
    </location>
</feature>
<feature type="domain" description="TRAM" evidence="2">
    <location>
        <begin position="8"/>
        <end position="66"/>
    </location>
</feature>
<feature type="active site" description="Nucleophile" evidence="3">
    <location>
        <position position="415"/>
    </location>
</feature>
<feature type="binding site" evidence="1">
    <location>
        <position position="79"/>
    </location>
    <ligand>
        <name>[4Fe-4S] cluster</name>
        <dbReference type="ChEBI" id="CHEBI:49883"/>
    </ligand>
</feature>
<feature type="binding site" evidence="1">
    <location>
        <position position="85"/>
    </location>
    <ligand>
        <name>[4Fe-4S] cluster</name>
        <dbReference type="ChEBI" id="CHEBI:49883"/>
    </ligand>
</feature>
<feature type="binding site" evidence="1">
    <location>
        <position position="88"/>
    </location>
    <ligand>
        <name>[4Fe-4S] cluster</name>
        <dbReference type="ChEBI" id="CHEBI:49883"/>
    </ligand>
</feature>
<feature type="binding site" evidence="1">
    <location>
        <position position="166"/>
    </location>
    <ligand>
        <name>[4Fe-4S] cluster</name>
        <dbReference type="ChEBI" id="CHEBI:49883"/>
    </ligand>
</feature>
<feature type="binding site" evidence="3">
    <location>
        <position position="290"/>
    </location>
    <ligand>
        <name>S-adenosyl-L-methionine</name>
        <dbReference type="ChEBI" id="CHEBI:59789"/>
    </ligand>
</feature>
<feature type="binding site" evidence="3">
    <location>
        <position position="319"/>
    </location>
    <ligand>
        <name>S-adenosyl-L-methionine</name>
        <dbReference type="ChEBI" id="CHEBI:59789"/>
    </ligand>
</feature>
<feature type="binding site" evidence="3">
    <location>
        <position position="340"/>
    </location>
    <ligand>
        <name>S-adenosyl-L-methionine</name>
        <dbReference type="ChEBI" id="CHEBI:59789"/>
    </ligand>
</feature>
<feature type="binding site" evidence="3">
    <location>
        <position position="388"/>
    </location>
    <ligand>
        <name>S-adenosyl-L-methionine</name>
        <dbReference type="ChEBI" id="CHEBI:59789"/>
    </ligand>
</feature>
<protein>
    <recommendedName>
        <fullName>Uncharacterized RNA methyltransferase BCE_0363</fullName>
        <ecNumber>2.1.1.-</ecNumber>
    </recommendedName>
</protein>
<accession>Q73EJ5</accession>
<reference key="1">
    <citation type="journal article" date="2004" name="Nucleic Acids Res.">
        <title>The genome sequence of Bacillus cereus ATCC 10987 reveals metabolic adaptations and a large plasmid related to Bacillus anthracis pXO1.</title>
        <authorList>
            <person name="Rasko D.A."/>
            <person name="Ravel J."/>
            <person name="Oekstad O.A."/>
            <person name="Helgason E."/>
            <person name="Cer R.Z."/>
            <person name="Jiang L."/>
            <person name="Shores K.A."/>
            <person name="Fouts D.E."/>
            <person name="Tourasse N.J."/>
            <person name="Angiuoli S.V."/>
            <person name="Kolonay J.F."/>
            <person name="Nelson W.C."/>
            <person name="Kolstoe A.-B."/>
            <person name="Fraser C.M."/>
            <person name="Read T.D."/>
        </authorList>
    </citation>
    <scope>NUCLEOTIDE SEQUENCE [LARGE SCALE GENOMIC DNA]</scope>
    <source>
        <strain>ATCC 10987 / NRS 248</strain>
    </source>
</reference>
<sequence length="460" mass="51618">MSTKMTPPVEKNEFIDVVFEDLTHDGAGVAKVKGYPIFVKNGLPGEEAQIKIIKVKKNFAFGRLMKLHTESPYRKDAECPVYNQCGGCQLQHLTYEGQLQAKEKQVRDVMQRIGGLSDVPVHPVLGMKNPWVYRNKAQVPIGEREGGLVAGFYRQGTHDIINMESCLIQAEENDTLIQEVKRICEKHGISAYNEERNKGTLRHVMARYGQVTGEIMLVFITRTAELPNKKAIIEEIATKFPEVKSIVQNVNPKRTNVIFGDKTTVLYGSEYIYDFIGDIKFAISARSFYQVNPEQTKVLYDKTLEYAKLDGNETVIDAYCGIGSISLFLAQKAKKVYGVEIVPEAIEDAKRNAALNNMTNAEFGVGEAEVVIPKWYKEGVIADTMVVDPPRKGCDEALLNTIIDMKPKRVVYVSCNPATLARDLKVLEEGGYKTQEVQPVDMFPHTTHVECVVLMSRVEK</sequence>
<gene>
    <name type="ordered locus">BCE_0363</name>
</gene>
<keyword id="KW-0004">4Fe-4S</keyword>
<keyword id="KW-0408">Iron</keyword>
<keyword id="KW-0411">Iron-sulfur</keyword>
<keyword id="KW-0479">Metal-binding</keyword>
<keyword id="KW-0489">Methyltransferase</keyword>
<keyword id="KW-0949">S-adenosyl-L-methionine</keyword>
<keyword id="KW-0808">Transferase</keyword>
<comment type="similarity">
    <text evidence="3">Belongs to the class I-like SAM-binding methyltransferase superfamily. RNA M5U methyltransferase family.</text>
</comment>
<name>Y363_BACC1</name>
<dbReference type="EC" id="2.1.1.-"/>
<dbReference type="EMBL" id="AE017194">
    <property type="protein sequence ID" value="AAS39299.1"/>
    <property type="molecule type" value="Genomic_DNA"/>
</dbReference>
<dbReference type="SMR" id="Q73EJ5"/>
<dbReference type="KEGG" id="bca:BCE_0363"/>
<dbReference type="HOGENOM" id="CLU_014689_7_0_9"/>
<dbReference type="Proteomes" id="UP000002527">
    <property type="component" value="Chromosome"/>
</dbReference>
<dbReference type="GO" id="GO:0051539">
    <property type="term" value="F:4 iron, 4 sulfur cluster binding"/>
    <property type="evidence" value="ECO:0007669"/>
    <property type="project" value="UniProtKB-KW"/>
</dbReference>
<dbReference type="GO" id="GO:0046872">
    <property type="term" value="F:metal ion binding"/>
    <property type="evidence" value="ECO:0007669"/>
    <property type="project" value="UniProtKB-KW"/>
</dbReference>
<dbReference type="GO" id="GO:0070041">
    <property type="term" value="F:rRNA (uridine-C5-)-methyltransferase activity"/>
    <property type="evidence" value="ECO:0007669"/>
    <property type="project" value="TreeGrafter"/>
</dbReference>
<dbReference type="GO" id="GO:0070475">
    <property type="term" value="P:rRNA base methylation"/>
    <property type="evidence" value="ECO:0007669"/>
    <property type="project" value="TreeGrafter"/>
</dbReference>
<dbReference type="CDD" id="cd02440">
    <property type="entry name" value="AdoMet_MTases"/>
    <property type="match status" value="1"/>
</dbReference>
<dbReference type="FunFam" id="3.40.50.150:FF:000009">
    <property type="entry name" value="23S rRNA (Uracil(1939)-C(5))-methyltransferase RlmD"/>
    <property type="match status" value="1"/>
</dbReference>
<dbReference type="FunFam" id="2.40.50.140:FF:000097">
    <property type="entry name" value="23S rRNA (uracil(1939)-C(5))-methyltransferase RlmD"/>
    <property type="match status" value="1"/>
</dbReference>
<dbReference type="FunFam" id="2.40.50.1070:FF:000003">
    <property type="entry name" value="23S rRNA (Uracil-5-)-methyltransferase RumA"/>
    <property type="match status" value="1"/>
</dbReference>
<dbReference type="Gene3D" id="2.40.50.1070">
    <property type="match status" value="1"/>
</dbReference>
<dbReference type="Gene3D" id="2.40.50.140">
    <property type="entry name" value="Nucleic acid-binding proteins"/>
    <property type="match status" value="1"/>
</dbReference>
<dbReference type="Gene3D" id="3.40.50.150">
    <property type="entry name" value="Vaccinia Virus protein VP39"/>
    <property type="match status" value="1"/>
</dbReference>
<dbReference type="InterPro" id="IPR030390">
    <property type="entry name" value="MeTrfase_TrmA_AS"/>
</dbReference>
<dbReference type="InterPro" id="IPR030391">
    <property type="entry name" value="MeTrfase_TrmA_CS"/>
</dbReference>
<dbReference type="InterPro" id="IPR012340">
    <property type="entry name" value="NA-bd_OB-fold"/>
</dbReference>
<dbReference type="InterPro" id="IPR029063">
    <property type="entry name" value="SAM-dependent_MTases_sf"/>
</dbReference>
<dbReference type="InterPro" id="IPR002792">
    <property type="entry name" value="TRAM_dom"/>
</dbReference>
<dbReference type="InterPro" id="IPR056743">
    <property type="entry name" value="TRM5-TYW2-like_MTfase"/>
</dbReference>
<dbReference type="InterPro" id="IPR010280">
    <property type="entry name" value="U5_MeTrfase_fam"/>
</dbReference>
<dbReference type="NCBIfam" id="TIGR00479">
    <property type="entry name" value="rumA"/>
    <property type="match status" value="1"/>
</dbReference>
<dbReference type="PANTHER" id="PTHR11061">
    <property type="entry name" value="RNA M5U METHYLTRANSFERASE"/>
    <property type="match status" value="1"/>
</dbReference>
<dbReference type="PANTHER" id="PTHR11061:SF30">
    <property type="entry name" value="TRNA (URACIL(54)-C(5))-METHYLTRANSFERASE"/>
    <property type="match status" value="1"/>
</dbReference>
<dbReference type="Pfam" id="PF01938">
    <property type="entry name" value="TRAM"/>
    <property type="match status" value="1"/>
</dbReference>
<dbReference type="Pfam" id="PF02475">
    <property type="entry name" value="TRM5-TYW2_MTfase"/>
    <property type="match status" value="1"/>
</dbReference>
<dbReference type="Pfam" id="PF05958">
    <property type="entry name" value="tRNA_U5-meth_tr"/>
    <property type="match status" value="1"/>
</dbReference>
<dbReference type="SUPFAM" id="SSF50249">
    <property type="entry name" value="Nucleic acid-binding proteins"/>
    <property type="match status" value="1"/>
</dbReference>
<dbReference type="SUPFAM" id="SSF53335">
    <property type="entry name" value="S-adenosyl-L-methionine-dependent methyltransferases"/>
    <property type="match status" value="1"/>
</dbReference>
<dbReference type="PROSITE" id="PS51687">
    <property type="entry name" value="SAM_MT_RNA_M5U"/>
    <property type="match status" value="1"/>
</dbReference>
<dbReference type="PROSITE" id="PS50926">
    <property type="entry name" value="TRAM"/>
    <property type="match status" value="1"/>
</dbReference>
<dbReference type="PROSITE" id="PS01230">
    <property type="entry name" value="TRMA_1"/>
    <property type="match status" value="1"/>
</dbReference>
<dbReference type="PROSITE" id="PS01231">
    <property type="entry name" value="TRMA_2"/>
    <property type="match status" value="1"/>
</dbReference>